<gene>
    <name type="primary">hacB</name>
    <name type="ordered locus">MM_0645</name>
</gene>
<comment type="function">
    <text evidence="2">Component of a hydro-lyase with broad substrate specificity for cis-unsaturated tricarboxylic acids. Catalyzes both the reversible dehydration of (R)-homocitrate ((R)-2-hydroxybutane-1,2,4-tricarboxylate) to produce cis-homoaconitate ((Z)-but-1-ene-1,2,4-tricarboxylate), and its hydration to homoisocitrate ((1R,2S)-1-hydroxybutane-1,2,4-tricarboxylate). Is also able to hydrate the analogous longer chain substrates cis-homo(2)-aconitate, cis-homo(3)-aconitate. These reactions are part of the biosynthesis pathway of coenzyme B.</text>
</comment>
<comment type="catalytic activity">
    <reaction evidence="2">
        <text>(2R)-homocitrate = (2R,3S)-homoisocitrate</text>
        <dbReference type="Rhea" id="RHEA:32303"/>
        <dbReference type="ChEBI" id="CHEBI:15404"/>
        <dbReference type="ChEBI" id="CHEBI:58884"/>
        <dbReference type="EC" id="4.2.1.114"/>
    </reaction>
    <physiologicalReaction direction="left-to-right" evidence="2">
        <dbReference type="Rhea" id="RHEA:32304"/>
    </physiologicalReaction>
</comment>
<comment type="catalytic activity">
    <reaction evidence="2">
        <text>(2R)-homocitrate = cis-homoaconitate + H2O</text>
        <dbReference type="Rhea" id="RHEA:26101"/>
        <dbReference type="ChEBI" id="CHEBI:15377"/>
        <dbReference type="ChEBI" id="CHEBI:58174"/>
        <dbReference type="ChEBI" id="CHEBI:58884"/>
    </reaction>
    <physiologicalReaction direction="left-to-right" evidence="2">
        <dbReference type="Rhea" id="RHEA:26102"/>
    </physiologicalReaction>
</comment>
<comment type="catalytic activity">
    <reaction evidence="2">
        <text>(2R,3S)-homoisocitrate = cis-homoaconitate + H2O</text>
        <dbReference type="Rhea" id="RHEA:15485"/>
        <dbReference type="ChEBI" id="CHEBI:15377"/>
        <dbReference type="ChEBI" id="CHEBI:15404"/>
        <dbReference type="ChEBI" id="CHEBI:58174"/>
    </reaction>
    <physiologicalReaction direction="right-to-left" evidence="2">
        <dbReference type="Rhea" id="RHEA:15487"/>
    </physiologicalReaction>
</comment>
<comment type="catalytic activity">
    <reaction evidence="2">
        <text>cis-(homo)2aconitate + H2O = (2R,3S)-iso(homo)2citrate</text>
        <dbReference type="Rhea" id="RHEA:68416"/>
        <dbReference type="ChEBI" id="CHEBI:15377"/>
        <dbReference type="ChEBI" id="CHEBI:72710"/>
        <dbReference type="ChEBI" id="CHEBI:72722"/>
        <dbReference type="EC" id="4.2.1.114"/>
    </reaction>
    <physiologicalReaction direction="left-to-right" evidence="2">
        <dbReference type="Rhea" id="RHEA:68417"/>
    </physiologicalReaction>
</comment>
<comment type="catalytic activity">
    <reaction evidence="2">
        <text>cis-(homo)3aconitate + H2O = (2R,3S)-iso(homo)3citrate</text>
        <dbReference type="Rhea" id="RHEA:68420"/>
        <dbReference type="ChEBI" id="CHEBI:15377"/>
        <dbReference type="ChEBI" id="CHEBI:72712"/>
        <dbReference type="ChEBI" id="CHEBI:177881"/>
        <dbReference type="EC" id="4.2.1.114"/>
    </reaction>
    <physiologicalReaction direction="left-to-right" evidence="2">
        <dbReference type="Rhea" id="RHEA:68421"/>
    </physiologicalReaction>
</comment>
<comment type="pathway">
    <text evidence="2">Organic acid metabolism; 2-oxosuberate biosynthesis.</text>
</comment>
<comment type="subunit">
    <text evidence="2">Heterotetramer of 2 HacA and 2 HacB proteins.</text>
</comment>
<comment type="similarity">
    <text evidence="3">Belongs to the LeuD family. LeuD type 2 subfamily.</text>
</comment>
<comment type="caution">
    <text evidence="3">Functional assignment as methanogen HACN has been made based on the presence of the YLRT motif involved in substrate specificity as discussed in PubMed:20170198.</text>
</comment>
<dbReference type="EC" id="4.2.1.114" evidence="2"/>
<dbReference type="EMBL" id="AE008384">
    <property type="protein sequence ID" value="AAM30341.1"/>
    <property type="molecule type" value="Genomic_DNA"/>
</dbReference>
<dbReference type="SMR" id="Q8PZ49"/>
<dbReference type="KEGG" id="mma:MM_0645"/>
<dbReference type="PATRIC" id="fig|192952.21.peg.763"/>
<dbReference type="eggNOG" id="arCOG02230">
    <property type="taxonomic scope" value="Archaea"/>
</dbReference>
<dbReference type="HOGENOM" id="CLU_081378_1_1_2"/>
<dbReference type="UniPathway" id="UPA00919"/>
<dbReference type="Proteomes" id="UP000000595">
    <property type="component" value="Chromosome"/>
</dbReference>
<dbReference type="GO" id="GO:0004409">
    <property type="term" value="F:homoaconitate hydratase activity"/>
    <property type="evidence" value="ECO:0007669"/>
    <property type="project" value="UniProtKB-UniRule"/>
</dbReference>
<dbReference type="GO" id="GO:0019298">
    <property type="term" value="P:coenzyme B biosynthetic process"/>
    <property type="evidence" value="ECO:0007669"/>
    <property type="project" value="UniProtKB-UniRule"/>
</dbReference>
<dbReference type="CDD" id="cd01577">
    <property type="entry name" value="IPMI_Swivel"/>
    <property type="match status" value="1"/>
</dbReference>
<dbReference type="Gene3D" id="3.20.19.10">
    <property type="entry name" value="Aconitase, domain 4"/>
    <property type="match status" value="1"/>
</dbReference>
<dbReference type="HAMAP" id="MF_01032">
    <property type="entry name" value="LeuD_type2"/>
    <property type="match status" value="1"/>
</dbReference>
<dbReference type="InterPro" id="IPR015928">
    <property type="entry name" value="Aconitase/3IPM_dehydase_swvl"/>
</dbReference>
<dbReference type="InterPro" id="IPR000573">
    <property type="entry name" value="AconitaseA/IPMdHydase_ssu_swvl"/>
</dbReference>
<dbReference type="InterPro" id="IPR033940">
    <property type="entry name" value="IPMI_Swivel"/>
</dbReference>
<dbReference type="InterPro" id="IPR050075">
    <property type="entry name" value="LeuD"/>
</dbReference>
<dbReference type="InterPro" id="IPR011827">
    <property type="entry name" value="LeuD_type2/HacB/DmdB"/>
</dbReference>
<dbReference type="NCBIfam" id="TIGR02087">
    <property type="entry name" value="LEUD_arch"/>
    <property type="match status" value="1"/>
</dbReference>
<dbReference type="PANTHER" id="PTHR43345:SF2">
    <property type="entry name" value="3-ISOPROPYLMALATE DEHYDRATASE SMALL SUBUNIT 1"/>
    <property type="match status" value="1"/>
</dbReference>
<dbReference type="PANTHER" id="PTHR43345">
    <property type="entry name" value="3-ISOPROPYLMALATE DEHYDRATASE SMALL SUBUNIT 2-RELATED-RELATED"/>
    <property type="match status" value="1"/>
</dbReference>
<dbReference type="Pfam" id="PF00694">
    <property type="entry name" value="Aconitase_C"/>
    <property type="match status" value="1"/>
</dbReference>
<dbReference type="SUPFAM" id="SSF52016">
    <property type="entry name" value="LeuD/IlvD-like"/>
    <property type="match status" value="1"/>
</dbReference>
<protein>
    <recommendedName>
        <fullName>Methanogen homoaconitase small subunit</fullName>
        <shortName>HACN</shortName>
        <ecNumber evidence="2">4.2.1.114</ecNumber>
    </recommendedName>
    <alternativeName>
        <fullName>Homoaconitate hydratase</fullName>
    </alternativeName>
</protein>
<evidence type="ECO:0000250" key="1"/>
<evidence type="ECO:0000250" key="2">
    <source>
        <dbReference type="UniProtKB" id="Q58667"/>
    </source>
</evidence>
<evidence type="ECO:0000305" key="3"/>
<proteinExistence type="inferred from homology"/>
<accession>Q8PZ49</accession>
<name>HACB_METMA</name>
<organism>
    <name type="scientific">Methanosarcina mazei (strain ATCC BAA-159 / DSM 3647 / Goe1 / Go1 / JCM 11833 / OCM 88)</name>
    <name type="common">Methanosarcina frisia</name>
    <dbReference type="NCBI Taxonomy" id="192952"/>
    <lineage>
        <taxon>Archaea</taxon>
        <taxon>Methanobacteriati</taxon>
        <taxon>Methanobacteriota</taxon>
        <taxon>Stenosarchaea group</taxon>
        <taxon>Methanomicrobia</taxon>
        <taxon>Methanosarcinales</taxon>
        <taxon>Methanosarcinaceae</taxon>
        <taxon>Methanosarcina</taxon>
    </lineage>
</organism>
<keyword id="KW-0456">Lyase</keyword>
<reference key="1">
    <citation type="journal article" date="2002" name="J. Mol. Microbiol. Biotechnol.">
        <title>The genome of Methanosarcina mazei: evidence for lateral gene transfer between Bacteria and Archaea.</title>
        <authorList>
            <person name="Deppenmeier U."/>
            <person name="Johann A."/>
            <person name="Hartsch T."/>
            <person name="Merkl R."/>
            <person name="Schmitz R.A."/>
            <person name="Martinez-Arias R."/>
            <person name="Henne A."/>
            <person name="Wiezer A."/>
            <person name="Baeumer S."/>
            <person name="Jacobi C."/>
            <person name="Brueggemann H."/>
            <person name="Lienard T."/>
            <person name="Christmann A."/>
            <person name="Boemecke M."/>
            <person name="Steckel S."/>
            <person name="Bhattacharyya A."/>
            <person name="Lykidis A."/>
            <person name="Overbeek R."/>
            <person name="Klenk H.-P."/>
            <person name="Gunsalus R.P."/>
            <person name="Fritz H.-J."/>
            <person name="Gottschalk G."/>
        </authorList>
    </citation>
    <scope>NUCLEOTIDE SEQUENCE [LARGE SCALE GENOMIC DNA]</scope>
    <source>
        <strain>ATCC BAA-159 / DSM 3647 / Goe1 / Go1 / JCM 11833 / OCM 88</strain>
    </source>
</reference>
<feature type="chain" id="PRO_0000141940" description="Methanogen homoaconitase small subunit">
    <location>
        <begin position="1"/>
        <end position="169"/>
    </location>
</feature>
<feature type="short sequence motif" description="YLRT">
    <location>
        <begin position="27"/>
        <end position="30"/>
    </location>
</feature>
<feature type="site" description="Critical for substrate specificity" evidence="1">
    <location>
        <position position="29"/>
    </location>
</feature>
<sequence>MMENPIKGRVWKFGNDIDTDVIIPGKYLRTKDMQVFAAHAMEGIDPGFSKKAKPGDIIVAGDNFGCGSSREQAPLALKHAGIACIVAKSFARIFFRNAINIGLPLMEADIECEEGDQIEVDLLKGEVKVSGKGVFRGNKLPDFLLDMLTDGGLVAHRKKVRDQEKEESA</sequence>